<evidence type="ECO:0000255" key="1">
    <source>
        <dbReference type="PROSITE-ProRule" id="PRU00274"/>
    </source>
</evidence>
<evidence type="ECO:0000305" key="2"/>
<accession>P00755</accession>
<gene>
    <name type="primary">Klk1b1</name>
    <name type="synonym">Klk-1</name>
    <name type="synonym">Klk1</name>
</gene>
<reference key="1">
    <citation type="journal article" date="1983" name="Nature">
        <title>Structure of mouse kallikrein gene family suggests a role in specific processing of biologically active peptides.</title>
        <authorList>
            <person name="Mason A.J."/>
            <person name="Evans B.A."/>
            <person name="Cox D.R."/>
            <person name="Shine J."/>
            <person name="Richards R.I."/>
        </authorList>
    </citation>
    <scope>NUCLEOTIDE SEQUENCE [GENOMIC DNA]</scope>
    <source>
        <strain>Quakenbush inbred</strain>
    </source>
</reference>
<reference key="2">
    <citation type="journal article" date="1987" name="J. Biol. Chem.">
        <title>Mouse glandular kallikrein genes. Structure and partial sequence analysis of the kallikrein gene locus.</title>
        <authorList>
            <person name="Evans B.A."/>
            <person name="Drinkwater C.C."/>
            <person name="Richards R.I."/>
        </authorList>
    </citation>
    <scope>NUCLEOTIDE SEQUENCE [GENOMIC DNA]</scope>
</reference>
<reference key="3">
    <citation type="journal article" date="2004" name="Genome Res.">
        <title>The status, quality, and expansion of the NIH full-length cDNA project: the Mammalian Gene Collection (MGC).</title>
        <authorList>
            <consortium name="The MGC Project Team"/>
        </authorList>
    </citation>
    <scope>NUCLEOTIDE SEQUENCE [LARGE SCALE MRNA]</scope>
    <source>
        <strain>FVB/N</strain>
        <tissue>Salivary gland</tissue>
    </source>
</reference>
<name>K1KB1_MOUSE</name>
<protein>
    <recommendedName>
        <fullName>Kallikrein 1-related peptidase b1</fullName>
        <ecNumber>3.4.21.35</ecNumber>
    </recommendedName>
    <alternativeName>
        <fullName>Glandular kallikrein K1</fullName>
        <shortName>mGK-1</shortName>
    </alternativeName>
    <alternativeName>
        <fullName>Tissue kallikrein-1</fullName>
    </alternativeName>
</protein>
<comment type="function">
    <text>Glandular kallikreins cleave Met-Lys and Arg-Ser bonds in kininogen to release Lys-bradykinin.</text>
</comment>
<comment type="catalytic activity">
    <reaction>
        <text>Preferential cleavage of Arg-|-Xaa bonds in small molecule substrates. Highly selective action to release kallidin (lysyl-bradykinin) from kininogen involves hydrolysis of Met-|-Xaa or Leu-|-Xaa.</text>
        <dbReference type="EC" id="3.4.21.35"/>
    </reaction>
</comment>
<comment type="similarity">
    <text evidence="1">Belongs to the peptidase S1 family. Kallikrein subfamily.</text>
</comment>
<keyword id="KW-1015">Disulfide bond</keyword>
<keyword id="KW-0325">Glycoprotein</keyword>
<keyword id="KW-0378">Hydrolase</keyword>
<keyword id="KW-0645">Protease</keyword>
<keyword id="KW-1185">Reference proteome</keyword>
<keyword id="KW-0720">Serine protease</keyword>
<keyword id="KW-0732">Signal</keyword>
<keyword id="KW-0865">Zymogen</keyword>
<organism>
    <name type="scientific">Mus musculus</name>
    <name type="common">Mouse</name>
    <dbReference type="NCBI Taxonomy" id="10090"/>
    <lineage>
        <taxon>Eukaryota</taxon>
        <taxon>Metazoa</taxon>
        <taxon>Chordata</taxon>
        <taxon>Craniata</taxon>
        <taxon>Vertebrata</taxon>
        <taxon>Euteleostomi</taxon>
        <taxon>Mammalia</taxon>
        <taxon>Eutheria</taxon>
        <taxon>Euarchontoglires</taxon>
        <taxon>Glires</taxon>
        <taxon>Rodentia</taxon>
        <taxon>Myomorpha</taxon>
        <taxon>Muroidea</taxon>
        <taxon>Muridae</taxon>
        <taxon>Murinae</taxon>
        <taxon>Mus</taxon>
        <taxon>Mus</taxon>
    </lineage>
</organism>
<feature type="signal peptide" evidence="2">
    <location>
        <begin position="1"/>
        <end position="18"/>
    </location>
</feature>
<feature type="propeptide" id="PRO_0000027966" description="Activation peptide" evidence="2">
    <location>
        <begin position="19"/>
        <end position="24"/>
    </location>
</feature>
<feature type="chain" id="PRO_0000027967" description="Kallikrein 1-related peptidase b1">
    <location>
        <begin position="25"/>
        <end position="261"/>
    </location>
</feature>
<feature type="domain" description="Peptidase S1" evidence="1">
    <location>
        <begin position="25"/>
        <end position="258"/>
    </location>
</feature>
<feature type="active site" description="Charge relay system">
    <location>
        <position position="65"/>
    </location>
</feature>
<feature type="active site" description="Charge relay system">
    <location>
        <position position="120"/>
    </location>
</feature>
<feature type="active site" description="Charge relay system">
    <location>
        <position position="213"/>
    </location>
</feature>
<feature type="glycosylation site" description="N-linked (GlcNAc...) asparagine" evidence="2">
    <location>
        <position position="102"/>
    </location>
</feature>
<feature type="disulfide bond" evidence="1">
    <location>
        <begin position="31"/>
        <end position="173"/>
    </location>
</feature>
<feature type="disulfide bond" evidence="1">
    <location>
        <begin position="50"/>
        <end position="66"/>
    </location>
</feature>
<feature type="disulfide bond" evidence="1">
    <location>
        <begin position="152"/>
        <end position="219"/>
    </location>
</feature>
<feature type="disulfide bond" evidence="1">
    <location>
        <begin position="184"/>
        <end position="198"/>
    </location>
</feature>
<feature type="disulfide bond" evidence="1">
    <location>
        <begin position="209"/>
        <end position="234"/>
    </location>
</feature>
<proteinExistence type="evidence at transcript level"/>
<sequence length="261" mass="29022">MWFLILFLALSLGGIDAAPPVQSRIVGGFKCEKNSQPWHVAVYRYKEYICGGVLLDANWVLTAAHCYYEKNNVWLGKNNLYQDEPSAQHRLVSKSFLHPCYNMSLHRNRIQNPQDDYSYDLMLLRLSKPADITDVVKPIALPTEEPKLGSTCLASGWGSIIPVKFQYAKDLQCVNLKLLPNEDCDKAYVQKVTDVMLCAGVKGGGKDTCKGDSGGPLICDGVLQGLTSWGYNPCGEPKKPGVYTKLIKFTSWIKDTLAQNP</sequence>
<dbReference type="EC" id="3.4.21.35"/>
<dbReference type="EMBL" id="V00829">
    <property type="protein sequence ID" value="CAA24213.1"/>
    <property type="molecule type" value="Genomic_DNA"/>
</dbReference>
<dbReference type="EMBL" id="J00390">
    <property type="protein sequence ID" value="AAA39349.1"/>
    <property type="molecule type" value="Genomic_DNA"/>
</dbReference>
<dbReference type="EMBL" id="BC026378">
    <property type="protein sequence ID" value="AAH26378.1"/>
    <property type="molecule type" value="mRNA"/>
</dbReference>
<dbReference type="CCDS" id="CCDS21190.1"/>
<dbReference type="PIR" id="A00941">
    <property type="entry name" value="KQMS1"/>
</dbReference>
<dbReference type="RefSeq" id="NP_034775.1">
    <property type="nucleotide sequence ID" value="NM_010645.3"/>
</dbReference>
<dbReference type="SMR" id="P00755"/>
<dbReference type="FunCoup" id="P00755">
    <property type="interactions" value="75"/>
</dbReference>
<dbReference type="STRING" id="10090.ENSMUSP00000077879"/>
<dbReference type="MEROPS" id="S01.164"/>
<dbReference type="GlyCosmos" id="P00755">
    <property type="glycosylation" value="1 site, No reported glycans"/>
</dbReference>
<dbReference type="GlyGen" id="P00755">
    <property type="glycosylation" value="1 site"/>
</dbReference>
<dbReference type="iPTMnet" id="P00755"/>
<dbReference type="PhosphoSitePlus" id="P00755"/>
<dbReference type="PaxDb" id="10090-ENSMUSP00000077879"/>
<dbReference type="ProteomicsDB" id="269139"/>
<dbReference type="DNASU" id="16623"/>
<dbReference type="Ensembl" id="ENSMUST00000078835.3">
    <property type="protein sequence ID" value="ENSMUSP00000077879.3"/>
    <property type="gene ID" value="ENSMUSG00000063133.3"/>
</dbReference>
<dbReference type="GeneID" id="16623"/>
<dbReference type="KEGG" id="mmu:16623"/>
<dbReference type="UCSC" id="uc009goc.1">
    <property type="organism name" value="mouse"/>
</dbReference>
<dbReference type="AGR" id="MGI:892019"/>
<dbReference type="CTD" id="16623"/>
<dbReference type="MGI" id="MGI:892019">
    <property type="gene designation" value="Klk1b1"/>
</dbReference>
<dbReference type="VEuPathDB" id="HostDB:ENSMUSG00000063133"/>
<dbReference type="eggNOG" id="KOG3627">
    <property type="taxonomic scope" value="Eukaryota"/>
</dbReference>
<dbReference type="GeneTree" id="ENSGT01020000230389"/>
<dbReference type="HOGENOM" id="CLU_006842_1_1_1"/>
<dbReference type="InParanoid" id="P00755"/>
<dbReference type="OMA" id="MQNNICI"/>
<dbReference type="OrthoDB" id="10061449at2759"/>
<dbReference type="PhylomeDB" id="P00755"/>
<dbReference type="TreeFam" id="TF331065"/>
<dbReference type="BRENDA" id="3.4.21.35">
    <property type="organism ID" value="3474"/>
</dbReference>
<dbReference type="Reactome" id="R-MMU-1592389">
    <property type="pathway name" value="Activation of Matrix Metalloproteinases"/>
</dbReference>
<dbReference type="BioGRID-ORCS" id="16623">
    <property type="hits" value="3 hits in 80 CRISPR screens"/>
</dbReference>
<dbReference type="ChiTaRS" id="Klk1b1">
    <property type="organism name" value="mouse"/>
</dbReference>
<dbReference type="PRO" id="PR:P00755"/>
<dbReference type="Proteomes" id="UP000000589">
    <property type="component" value="Chromosome 7"/>
</dbReference>
<dbReference type="RNAct" id="P00755">
    <property type="molecule type" value="protein"/>
</dbReference>
<dbReference type="Bgee" id="ENSMUSG00000063133">
    <property type="expression patterns" value="Expressed in submandibular gland and 8 other cell types or tissues"/>
</dbReference>
<dbReference type="ExpressionAtlas" id="P00755">
    <property type="expression patterns" value="baseline and differential"/>
</dbReference>
<dbReference type="GO" id="GO:0004252">
    <property type="term" value="F:serine-type endopeptidase activity"/>
    <property type="evidence" value="ECO:0007669"/>
    <property type="project" value="UniProtKB-EC"/>
</dbReference>
<dbReference type="GO" id="GO:0002936">
    <property type="term" value="P:bradykinin biosynthetic process"/>
    <property type="evidence" value="ECO:0000315"/>
    <property type="project" value="MGI"/>
</dbReference>
<dbReference type="GO" id="GO:0060048">
    <property type="term" value="P:cardiac muscle contraction"/>
    <property type="evidence" value="ECO:0000315"/>
    <property type="project" value="MGI"/>
</dbReference>
<dbReference type="GO" id="GO:0003220">
    <property type="term" value="P:left ventricular cardiac muscle tissue morphogenesis"/>
    <property type="evidence" value="ECO:0000315"/>
    <property type="project" value="MGI"/>
</dbReference>
<dbReference type="GO" id="GO:0006508">
    <property type="term" value="P:proteolysis"/>
    <property type="evidence" value="ECO:0007669"/>
    <property type="project" value="UniProtKB-KW"/>
</dbReference>
<dbReference type="GO" id="GO:0003073">
    <property type="term" value="P:regulation of systemic arterial blood pressure"/>
    <property type="evidence" value="ECO:0000315"/>
    <property type="project" value="MGI"/>
</dbReference>
<dbReference type="GO" id="GO:0002255">
    <property type="term" value="P:tissue kallikrein-kinin cascade"/>
    <property type="evidence" value="ECO:0000315"/>
    <property type="project" value="MGI"/>
</dbReference>
<dbReference type="GO" id="GO:0042311">
    <property type="term" value="P:vasodilation"/>
    <property type="evidence" value="ECO:0000315"/>
    <property type="project" value="MGI"/>
</dbReference>
<dbReference type="CDD" id="cd00190">
    <property type="entry name" value="Tryp_SPc"/>
    <property type="match status" value="1"/>
</dbReference>
<dbReference type="FunFam" id="2.40.10.10:FF:000032">
    <property type="entry name" value="Kallikrein 1-related peptidase C9"/>
    <property type="match status" value="1"/>
</dbReference>
<dbReference type="FunFam" id="2.40.10.10:FF:000042">
    <property type="entry name" value="Kallikrein 1-related peptidase C9"/>
    <property type="match status" value="1"/>
</dbReference>
<dbReference type="Gene3D" id="2.40.10.10">
    <property type="entry name" value="Trypsin-like serine proteases"/>
    <property type="match status" value="2"/>
</dbReference>
<dbReference type="InterPro" id="IPR009003">
    <property type="entry name" value="Peptidase_S1_PA"/>
</dbReference>
<dbReference type="InterPro" id="IPR043504">
    <property type="entry name" value="Peptidase_S1_PA_chymotrypsin"/>
</dbReference>
<dbReference type="InterPro" id="IPR001314">
    <property type="entry name" value="Peptidase_S1A"/>
</dbReference>
<dbReference type="InterPro" id="IPR001254">
    <property type="entry name" value="Trypsin_dom"/>
</dbReference>
<dbReference type="InterPro" id="IPR018114">
    <property type="entry name" value="TRYPSIN_HIS"/>
</dbReference>
<dbReference type="InterPro" id="IPR033116">
    <property type="entry name" value="TRYPSIN_SER"/>
</dbReference>
<dbReference type="PANTHER" id="PTHR24271:SF47">
    <property type="entry name" value="KALLIKREIN-1"/>
    <property type="match status" value="1"/>
</dbReference>
<dbReference type="PANTHER" id="PTHR24271">
    <property type="entry name" value="KALLIKREIN-RELATED"/>
    <property type="match status" value="1"/>
</dbReference>
<dbReference type="Pfam" id="PF00089">
    <property type="entry name" value="Trypsin"/>
    <property type="match status" value="1"/>
</dbReference>
<dbReference type="PRINTS" id="PR00722">
    <property type="entry name" value="CHYMOTRYPSIN"/>
</dbReference>
<dbReference type="SMART" id="SM00020">
    <property type="entry name" value="Tryp_SPc"/>
    <property type="match status" value="1"/>
</dbReference>
<dbReference type="SUPFAM" id="SSF50494">
    <property type="entry name" value="Trypsin-like serine proteases"/>
    <property type="match status" value="1"/>
</dbReference>
<dbReference type="PROSITE" id="PS50240">
    <property type="entry name" value="TRYPSIN_DOM"/>
    <property type="match status" value="1"/>
</dbReference>
<dbReference type="PROSITE" id="PS00134">
    <property type="entry name" value="TRYPSIN_HIS"/>
    <property type="match status" value="1"/>
</dbReference>
<dbReference type="PROSITE" id="PS00135">
    <property type="entry name" value="TRYPSIN_SER"/>
    <property type="match status" value="1"/>
</dbReference>